<name>RL21_PARXL</name>
<sequence>MYAVIKTGGKQYKVAVGEKLKVEQIPADIDAEITLDQVLAVGEGESIKFGTPLVSGASVKATVVSQGRHAKVTIFKMRRRKHYQKHGGHRQNYTELRIDAINA</sequence>
<accession>Q13U13</accession>
<evidence type="ECO:0000255" key="1">
    <source>
        <dbReference type="HAMAP-Rule" id="MF_01363"/>
    </source>
</evidence>
<evidence type="ECO:0000305" key="2"/>
<keyword id="KW-1185">Reference proteome</keyword>
<keyword id="KW-0687">Ribonucleoprotein</keyword>
<keyword id="KW-0689">Ribosomal protein</keyword>
<keyword id="KW-0694">RNA-binding</keyword>
<keyword id="KW-0699">rRNA-binding</keyword>
<feature type="chain" id="PRO_0000269298" description="Large ribosomal subunit protein bL21">
    <location>
        <begin position="1"/>
        <end position="103"/>
    </location>
</feature>
<dbReference type="EMBL" id="CP000270">
    <property type="protein sequence ID" value="ABE32426.1"/>
    <property type="molecule type" value="Genomic_DNA"/>
</dbReference>
<dbReference type="RefSeq" id="WP_007180329.1">
    <property type="nucleotide sequence ID" value="NZ_CP008760.1"/>
</dbReference>
<dbReference type="SMR" id="Q13U13"/>
<dbReference type="STRING" id="266265.Bxe_A0507"/>
<dbReference type="GeneID" id="97303687"/>
<dbReference type="KEGG" id="bxb:DR64_2684"/>
<dbReference type="KEGG" id="bxe:Bxe_A0507"/>
<dbReference type="eggNOG" id="COG0261">
    <property type="taxonomic scope" value="Bacteria"/>
</dbReference>
<dbReference type="OrthoDB" id="9813334at2"/>
<dbReference type="Proteomes" id="UP000001817">
    <property type="component" value="Chromosome 1"/>
</dbReference>
<dbReference type="GO" id="GO:0005737">
    <property type="term" value="C:cytoplasm"/>
    <property type="evidence" value="ECO:0007669"/>
    <property type="project" value="UniProtKB-ARBA"/>
</dbReference>
<dbReference type="GO" id="GO:1990904">
    <property type="term" value="C:ribonucleoprotein complex"/>
    <property type="evidence" value="ECO:0007669"/>
    <property type="project" value="UniProtKB-KW"/>
</dbReference>
<dbReference type="GO" id="GO:0005840">
    <property type="term" value="C:ribosome"/>
    <property type="evidence" value="ECO:0007669"/>
    <property type="project" value="UniProtKB-KW"/>
</dbReference>
<dbReference type="GO" id="GO:0019843">
    <property type="term" value="F:rRNA binding"/>
    <property type="evidence" value="ECO:0007669"/>
    <property type="project" value="UniProtKB-UniRule"/>
</dbReference>
<dbReference type="GO" id="GO:0003735">
    <property type="term" value="F:structural constituent of ribosome"/>
    <property type="evidence" value="ECO:0007669"/>
    <property type="project" value="InterPro"/>
</dbReference>
<dbReference type="GO" id="GO:0006412">
    <property type="term" value="P:translation"/>
    <property type="evidence" value="ECO:0007669"/>
    <property type="project" value="UniProtKB-UniRule"/>
</dbReference>
<dbReference type="HAMAP" id="MF_01363">
    <property type="entry name" value="Ribosomal_bL21"/>
    <property type="match status" value="1"/>
</dbReference>
<dbReference type="InterPro" id="IPR028909">
    <property type="entry name" value="bL21-like"/>
</dbReference>
<dbReference type="InterPro" id="IPR036164">
    <property type="entry name" value="bL21-like_sf"/>
</dbReference>
<dbReference type="InterPro" id="IPR001787">
    <property type="entry name" value="Ribosomal_bL21"/>
</dbReference>
<dbReference type="InterPro" id="IPR018258">
    <property type="entry name" value="Ribosomal_bL21_CS"/>
</dbReference>
<dbReference type="NCBIfam" id="TIGR00061">
    <property type="entry name" value="L21"/>
    <property type="match status" value="1"/>
</dbReference>
<dbReference type="PANTHER" id="PTHR21349">
    <property type="entry name" value="50S RIBOSOMAL PROTEIN L21"/>
    <property type="match status" value="1"/>
</dbReference>
<dbReference type="PANTHER" id="PTHR21349:SF0">
    <property type="entry name" value="LARGE RIBOSOMAL SUBUNIT PROTEIN BL21M"/>
    <property type="match status" value="1"/>
</dbReference>
<dbReference type="Pfam" id="PF00829">
    <property type="entry name" value="Ribosomal_L21p"/>
    <property type="match status" value="1"/>
</dbReference>
<dbReference type="SUPFAM" id="SSF141091">
    <property type="entry name" value="L21p-like"/>
    <property type="match status" value="1"/>
</dbReference>
<dbReference type="PROSITE" id="PS01169">
    <property type="entry name" value="RIBOSOMAL_L21"/>
    <property type="match status" value="1"/>
</dbReference>
<proteinExistence type="inferred from homology"/>
<comment type="function">
    <text evidence="1">This protein binds to 23S rRNA in the presence of protein L20.</text>
</comment>
<comment type="subunit">
    <text evidence="1">Part of the 50S ribosomal subunit. Contacts protein L20.</text>
</comment>
<comment type="similarity">
    <text evidence="1">Belongs to the bacterial ribosomal protein bL21 family.</text>
</comment>
<reference key="1">
    <citation type="journal article" date="2006" name="Proc. Natl. Acad. Sci. U.S.A.">
        <title>Burkholderia xenovorans LB400 harbors a multi-replicon, 9.73-Mbp genome shaped for versatility.</title>
        <authorList>
            <person name="Chain P.S.G."/>
            <person name="Denef V.J."/>
            <person name="Konstantinidis K.T."/>
            <person name="Vergez L.M."/>
            <person name="Agullo L."/>
            <person name="Reyes V.L."/>
            <person name="Hauser L."/>
            <person name="Cordova M."/>
            <person name="Gomez L."/>
            <person name="Gonzalez M."/>
            <person name="Land M."/>
            <person name="Lao V."/>
            <person name="Larimer F."/>
            <person name="LiPuma J.J."/>
            <person name="Mahenthiralingam E."/>
            <person name="Malfatti S.A."/>
            <person name="Marx C.J."/>
            <person name="Parnell J.J."/>
            <person name="Ramette A."/>
            <person name="Richardson P."/>
            <person name="Seeger M."/>
            <person name="Smith D."/>
            <person name="Spilker T."/>
            <person name="Sul W.J."/>
            <person name="Tsoi T.V."/>
            <person name="Ulrich L.E."/>
            <person name="Zhulin I.B."/>
            <person name="Tiedje J.M."/>
        </authorList>
    </citation>
    <scope>NUCLEOTIDE SEQUENCE [LARGE SCALE GENOMIC DNA]</scope>
    <source>
        <strain>LB400</strain>
    </source>
</reference>
<organism>
    <name type="scientific">Paraburkholderia xenovorans (strain LB400)</name>
    <dbReference type="NCBI Taxonomy" id="266265"/>
    <lineage>
        <taxon>Bacteria</taxon>
        <taxon>Pseudomonadati</taxon>
        <taxon>Pseudomonadota</taxon>
        <taxon>Betaproteobacteria</taxon>
        <taxon>Burkholderiales</taxon>
        <taxon>Burkholderiaceae</taxon>
        <taxon>Paraburkholderia</taxon>
    </lineage>
</organism>
<protein>
    <recommendedName>
        <fullName evidence="1">Large ribosomal subunit protein bL21</fullName>
    </recommendedName>
    <alternativeName>
        <fullName evidence="2">50S ribosomal protein L21</fullName>
    </alternativeName>
</protein>
<gene>
    <name evidence="1" type="primary">rplU</name>
    <name type="ordered locus">Bxeno_A3888</name>
    <name type="ORF">Bxe_A0507</name>
</gene>